<keyword id="KW-0067">ATP-binding</keyword>
<keyword id="KW-0460">Magnesium</keyword>
<keyword id="KW-0547">Nucleotide-binding</keyword>
<keyword id="KW-0808">Transferase</keyword>
<keyword id="KW-0819">tRNA processing</keyword>
<evidence type="ECO:0000255" key="1">
    <source>
        <dbReference type="HAMAP-Rule" id="MF_00185"/>
    </source>
</evidence>
<feature type="chain" id="PRO_1000098686" description="tRNA dimethylallyltransferase">
    <location>
        <begin position="1"/>
        <end position="316"/>
    </location>
</feature>
<feature type="region of interest" description="Interaction with substrate tRNA" evidence="1">
    <location>
        <begin position="42"/>
        <end position="45"/>
    </location>
</feature>
<feature type="region of interest" description="Interaction with substrate tRNA" evidence="1">
    <location>
        <begin position="166"/>
        <end position="170"/>
    </location>
</feature>
<feature type="region of interest" description="Interaction with substrate tRNA" evidence="1">
    <location>
        <begin position="247"/>
        <end position="252"/>
    </location>
</feature>
<feature type="binding site" evidence="1">
    <location>
        <begin position="17"/>
        <end position="24"/>
    </location>
    <ligand>
        <name>ATP</name>
        <dbReference type="ChEBI" id="CHEBI:30616"/>
    </ligand>
</feature>
<feature type="binding site" evidence="1">
    <location>
        <begin position="19"/>
        <end position="24"/>
    </location>
    <ligand>
        <name>substrate</name>
    </ligand>
</feature>
<feature type="site" description="Interaction with substrate tRNA" evidence="1">
    <location>
        <position position="108"/>
    </location>
</feature>
<feature type="site" description="Interaction with substrate tRNA" evidence="1">
    <location>
        <position position="130"/>
    </location>
</feature>
<gene>
    <name evidence="1" type="primary">miaA</name>
    <name type="ordered locus">SNSL254_A4721</name>
</gene>
<protein>
    <recommendedName>
        <fullName evidence="1">tRNA dimethylallyltransferase</fullName>
        <ecNumber evidence="1">2.5.1.75</ecNumber>
    </recommendedName>
    <alternativeName>
        <fullName evidence="1">Dimethylallyl diphosphate:tRNA dimethylallyltransferase</fullName>
        <shortName evidence="1">DMAPP:tRNA dimethylallyltransferase</shortName>
        <shortName evidence="1">DMATase</shortName>
    </alternativeName>
    <alternativeName>
        <fullName evidence="1">Isopentenyl-diphosphate:tRNA isopentenyltransferase</fullName>
        <shortName evidence="1">IPP transferase</shortName>
        <shortName evidence="1">IPPT</shortName>
        <shortName evidence="1">IPTase</shortName>
    </alternativeName>
</protein>
<name>MIAA_SALNS</name>
<organism>
    <name type="scientific">Salmonella newport (strain SL254)</name>
    <dbReference type="NCBI Taxonomy" id="423368"/>
    <lineage>
        <taxon>Bacteria</taxon>
        <taxon>Pseudomonadati</taxon>
        <taxon>Pseudomonadota</taxon>
        <taxon>Gammaproteobacteria</taxon>
        <taxon>Enterobacterales</taxon>
        <taxon>Enterobacteriaceae</taxon>
        <taxon>Salmonella</taxon>
    </lineage>
</organism>
<accession>B4T2R6</accession>
<dbReference type="EC" id="2.5.1.75" evidence="1"/>
<dbReference type="EMBL" id="CP001113">
    <property type="protein sequence ID" value="ACF62603.1"/>
    <property type="molecule type" value="Genomic_DNA"/>
</dbReference>
<dbReference type="RefSeq" id="WP_001000737.1">
    <property type="nucleotide sequence ID" value="NZ_CCMR01000003.1"/>
</dbReference>
<dbReference type="SMR" id="B4T2R6"/>
<dbReference type="KEGG" id="see:SNSL254_A4721"/>
<dbReference type="HOGENOM" id="CLU_032616_0_0_6"/>
<dbReference type="Proteomes" id="UP000008824">
    <property type="component" value="Chromosome"/>
</dbReference>
<dbReference type="GO" id="GO:0005524">
    <property type="term" value="F:ATP binding"/>
    <property type="evidence" value="ECO:0007669"/>
    <property type="project" value="UniProtKB-UniRule"/>
</dbReference>
<dbReference type="GO" id="GO:0052381">
    <property type="term" value="F:tRNA dimethylallyltransferase activity"/>
    <property type="evidence" value="ECO:0007669"/>
    <property type="project" value="UniProtKB-UniRule"/>
</dbReference>
<dbReference type="GO" id="GO:0006400">
    <property type="term" value="P:tRNA modification"/>
    <property type="evidence" value="ECO:0007669"/>
    <property type="project" value="TreeGrafter"/>
</dbReference>
<dbReference type="FunFam" id="1.10.20.140:FF:000001">
    <property type="entry name" value="tRNA dimethylallyltransferase"/>
    <property type="match status" value="1"/>
</dbReference>
<dbReference type="FunFam" id="1.10.287.890:FF:000001">
    <property type="entry name" value="tRNA dimethylallyltransferase"/>
    <property type="match status" value="1"/>
</dbReference>
<dbReference type="Gene3D" id="1.10.20.140">
    <property type="match status" value="1"/>
</dbReference>
<dbReference type="Gene3D" id="1.10.287.890">
    <property type="entry name" value="Crystal structure of tRNA isopentenylpyrophosphate transferase (bh2366) domain"/>
    <property type="match status" value="1"/>
</dbReference>
<dbReference type="Gene3D" id="3.40.50.300">
    <property type="entry name" value="P-loop containing nucleotide triphosphate hydrolases"/>
    <property type="match status" value="1"/>
</dbReference>
<dbReference type="HAMAP" id="MF_00185">
    <property type="entry name" value="IPP_trans"/>
    <property type="match status" value="1"/>
</dbReference>
<dbReference type="InterPro" id="IPR039657">
    <property type="entry name" value="Dimethylallyltransferase"/>
</dbReference>
<dbReference type="InterPro" id="IPR018022">
    <property type="entry name" value="IPT"/>
</dbReference>
<dbReference type="InterPro" id="IPR027417">
    <property type="entry name" value="P-loop_NTPase"/>
</dbReference>
<dbReference type="NCBIfam" id="TIGR00174">
    <property type="entry name" value="miaA"/>
    <property type="match status" value="1"/>
</dbReference>
<dbReference type="PANTHER" id="PTHR11088">
    <property type="entry name" value="TRNA DIMETHYLALLYLTRANSFERASE"/>
    <property type="match status" value="1"/>
</dbReference>
<dbReference type="PANTHER" id="PTHR11088:SF60">
    <property type="entry name" value="TRNA DIMETHYLALLYLTRANSFERASE"/>
    <property type="match status" value="1"/>
</dbReference>
<dbReference type="Pfam" id="PF01715">
    <property type="entry name" value="IPPT"/>
    <property type="match status" value="1"/>
</dbReference>
<dbReference type="SUPFAM" id="SSF52540">
    <property type="entry name" value="P-loop containing nucleoside triphosphate hydrolases"/>
    <property type="match status" value="1"/>
</dbReference>
<sequence>MNDVSKASLPKAIFLMGPTASGKTALAIELRKVLPVELISVDSALIYRGMDIGTAKPNADELKAAPHRLLDIRDPSQAYSAADFRRDALEQMAEITAAGRIPLLVGGTMLYFKALLEGLSPLPSADPEVRSRIEQQAAELGWEALHQQLQEIDPVAAARIHPNDPQRLSRALEVFFISGKTLTELTQTSGDALPYQVHQFAIAPASRELLHQRIELRFHQMLASGFEAEVRALFARGDLHTDLPSIRCVGYRQMWSYIEGEISYDEMVYRGVCATRQLAKRQMTWLRGWEGVRWLDSENPDRARKEVLQVVGAIAD</sequence>
<proteinExistence type="inferred from homology"/>
<comment type="function">
    <text evidence="1">Catalyzes the transfer of a dimethylallyl group onto the adenine at position 37 in tRNAs that read codons beginning with uridine, leading to the formation of N6-(dimethylallyl)adenosine (i(6)A).</text>
</comment>
<comment type="catalytic activity">
    <reaction evidence="1">
        <text>adenosine(37) in tRNA + dimethylallyl diphosphate = N(6)-dimethylallyladenosine(37) in tRNA + diphosphate</text>
        <dbReference type="Rhea" id="RHEA:26482"/>
        <dbReference type="Rhea" id="RHEA-COMP:10162"/>
        <dbReference type="Rhea" id="RHEA-COMP:10375"/>
        <dbReference type="ChEBI" id="CHEBI:33019"/>
        <dbReference type="ChEBI" id="CHEBI:57623"/>
        <dbReference type="ChEBI" id="CHEBI:74411"/>
        <dbReference type="ChEBI" id="CHEBI:74415"/>
        <dbReference type="EC" id="2.5.1.75"/>
    </reaction>
</comment>
<comment type="cofactor">
    <cofactor evidence="1">
        <name>Mg(2+)</name>
        <dbReference type="ChEBI" id="CHEBI:18420"/>
    </cofactor>
</comment>
<comment type="subunit">
    <text evidence="1">Monomer.</text>
</comment>
<comment type="similarity">
    <text evidence="1">Belongs to the IPP transferase family.</text>
</comment>
<reference key="1">
    <citation type="journal article" date="2011" name="J. Bacteriol.">
        <title>Comparative genomics of 28 Salmonella enterica isolates: evidence for CRISPR-mediated adaptive sublineage evolution.</title>
        <authorList>
            <person name="Fricke W.F."/>
            <person name="Mammel M.K."/>
            <person name="McDermott P.F."/>
            <person name="Tartera C."/>
            <person name="White D.G."/>
            <person name="Leclerc J.E."/>
            <person name="Ravel J."/>
            <person name="Cebula T.A."/>
        </authorList>
    </citation>
    <scope>NUCLEOTIDE SEQUENCE [LARGE SCALE GENOMIC DNA]</scope>
    <source>
        <strain>SL254</strain>
    </source>
</reference>